<proteinExistence type="evidence at protein level"/>
<geneLocation type="chloroplast"/>
<accession>P13165</accession>
<accession>A1E9K0</accession>
<evidence type="ECO:0000255" key="1"/>
<evidence type="ECO:0000269" key="2">
    <source>
    </source>
</evidence>
<evidence type="ECO:0000305" key="3"/>
<evidence type="ECO:0000305" key="4">
    <source>
    </source>
</evidence>
<evidence type="ECO:0007829" key="5">
    <source>
        <dbReference type="PDB" id="7EW6"/>
    </source>
</evidence>
<gene>
    <name type="primary">psaI</name>
</gene>
<comment type="function">
    <text>May help in the organization of the PsaL subunit.</text>
</comment>
<comment type="subunit">
    <text evidence="2">PSI consists of a core antenna complex that captures photons, and an electron transfer chain that converts photonic excitation into a charge separation. The eukaryotic PSI reaction center is composed of at least 11 subunits. Only detected in green leaves and not etioplasts; PSI is only assembled in green leaves (PubMed:19137553).</text>
</comment>
<comment type="subcellular location">
    <subcellularLocation>
        <location evidence="4">Plastid</location>
        <location evidence="4">Chloroplast thylakoid membrane</location>
        <topology evidence="4">Single-pass membrane protein</topology>
    </subcellularLocation>
</comment>
<comment type="similarity">
    <text evidence="3">Belongs to the PsaI family.</text>
</comment>
<name>PSAI_HORVU</name>
<sequence length="36" mass="4008">MTDLNLPSIFVPLVGLVFPAIAMTSLFLYVQKKKIV</sequence>
<dbReference type="EMBL" id="J05104">
    <property type="protein sequence ID" value="AAA84050.1"/>
    <property type="molecule type" value="Genomic_DNA"/>
</dbReference>
<dbReference type="EMBL" id="EF115541">
    <property type="protein sequence ID" value="ABK79422.1"/>
    <property type="molecule type" value="Genomic_DNA"/>
</dbReference>
<dbReference type="PIR" id="A34302">
    <property type="entry name" value="A34302"/>
</dbReference>
<dbReference type="RefSeq" id="YP_010144435.1">
    <property type="nucleotide sequence ID" value="NC_056985.1"/>
</dbReference>
<dbReference type="RefSeq" id="YP_874662.1">
    <property type="nucleotide sequence ID" value="NC_008590.1"/>
</dbReference>
<dbReference type="PDB" id="7EW6">
    <property type="method" value="EM"/>
    <property type="resolution" value="3.40 A"/>
    <property type="chains" value="I=1-36"/>
</dbReference>
<dbReference type="PDB" id="7EWK">
    <property type="method" value="EM"/>
    <property type="resolution" value="3.88 A"/>
    <property type="chains" value="I=5-34"/>
</dbReference>
<dbReference type="PDBsum" id="7EW6"/>
<dbReference type="PDBsum" id="7EWK"/>
<dbReference type="SMR" id="P13165"/>
<dbReference type="GeneID" id="4525189"/>
<dbReference type="GeneID" id="67140616"/>
<dbReference type="GO" id="GO:0009535">
    <property type="term" value="C:chloroplast thylakoid membrane"/>
    <property type="evidence" value="ECO:0007669"/>
    <property type="project" value="UniProtKB-SubCell"/>
</dbReference>
<dbReference type="GO" id="GO:0009522">
    <property type="term" value="C:photosystem I"/>
    <property type="evidence" value="ECO:0007669"/>
    <property type="project" value="UniProtKB-KW"/>
</dbReference>
<dbReference type="GO" id="GO:0015979">
    <property type="term" value="P:photosynthesis"/>
    <property type="evidence" value="ECO:0007669"/>
    <property type="project" value="UniProtKB-UniRule"/>
</dbReference>
<dbReference type="HAMAP" id="MF_00431">
    <property type="entry name" value="PSI_PsaI"/>
    <property type="match status" value="1"/>
</dbReference>
<dbReference type="InterPro" id="IPR001302">
    <property type="entry name" value="PSI_PsaI"/>
</dbReference>
<dbReference type="InterPro" id="IPR036357">
    <property type="entry name" value="PSI_PsaI_sf"/>
</dbReference>
<dbReference type="NCBIfam" id="TIGR03052">
    <property type="entry name" value="PS_I_psaI"/>
    <property type="match status" value="1"/>
</dbReference>
<dbReference type="PANTHER" id="PTHR35775">
    <property type="match status" value="1"/>
</dbReference>
<dbReference type="PANTHER" id="PTHR35775:SF2">
    <property type="entry name" value="PHOTOSYSTEM I REACTION CENTER SUBUNIT VIII"/>
    <property type="match status" value="1"/>
</dbReference>
<dbReference type="Pfam" id="PF00796">
    <property type="entry name" value="PSI_8"/>
    <property type="match status" value="1"/>
</dbReference>
<dbReference type="SUPFAM" id="SSF81540">
    <property type="entry name" value="Subunit VIII of photosystem I reaction centre, PsaI"/>
    <property type="match status" value="1"/>
</dbReference>
<protein>
    <recommendedName>
        <fullName>Photosystem I reaction center subunit VIII</fullName>
        <shortName>PSI-I</shortName>
    </recommendedName>
</protein>
<feature type="chain" id="PRO_0000194655" description="Photosystem I reaction center subunit VIII">
    <location>
        <begin position="1"/>
        <end position="36"/>
    </location>
</feature>
<feature type="transmembrane region" description="Helical" evidence="1">
    <location>
        <begin position="10"/>
        <end position="30"/>
    </location>
</feature>
<feature type="helix" evidence="5">
    <location>
        <begin position="6"/>
        <end position="15"/>
    </location>
</feature>
<feature type="helix" evidence="5">
    <location>
        <begin position="17"/>
        <end position="30"/>
    </location>
</feature>
<keyword id="KW-0002">3D-structure</keyword>
<keyword id="KW-0150">Chloroplast</keyword>
<keyword id="KW-0472">Membrane</keyword>
<keyword id="KW-0602">Photosynthesis</keyword>
<keyword id="KW-0603">Photosystem I</keyword>
<keyword id="KW-0934">Plastid</keyword>
<keyword id="KW-0793">Thylakoid</keyword>
<keyword id="KW-0812">Transmembrane</keyword>
<keyword id="KW-1133">Transmembrane helix</keyword>
<reference key="1">
    <citation type="journal article" date="1989" name="J. Biol. Chem.">
        <title>The primary structure of a 4.0-kDa photosystem I polypeptide encoded by the chloroplast psaI gene.</title>
        <authorList>
            <person name="Scheller H.V."/>
            <person name="Okkels J.S."/>
            <person name="Hoej P.B."/>
            <person name="Svendsen I."/>
            <person name="Roepstorff P."/>
            <person name="Moeller B.L."/>
        </authorList>
    </citation>
    <scope>NUCLEOTIDE SEQUENCE [GENOMIC DNA]</scope>
</reference>
<reference key="2">
    <citation type="journal article" date="2007" name="Theor. Appl. Genet.">
        <title>Complete chloroplast genome sequences of Hordeum vulgare, Sorghum bicolor and Agrostis stolonifera, and comparative analyses with other grass genomes.</title>
        <authorList>
            <person name="Saski C."/>
            <person name="Lee S.-B."/>
            <person name="Fjellheim S."/>
            <person name="Guda C."/>
            <person name="Jansen R.K."/>
            <person name="Luo H."/>
            <person name="Tomkins J."/>
            <person name="Rognli O.A."/>
            <person name="Daniell H."/>
            <person name="Clarke J.L."/>
        </authorList>
    </citation>
    <scope>NUCLEOTIDE SEQUENCE [LARGE SCALE GENOMIC DNA]</scope>
    <source>
        <strain>cv. Morex</strain>
    </source>
</reference>
<reference key="3">
    <citation type="journal article" date="2009" name="Proteomics">
        <title>Mass spectrometric characterization of membrane integral low molecular weight proteins from photosystem II in barley etioplasts.</title>
        <authorList>
            <person name="Ploescher M."/>
            <person name="Granvogl B."/>
            <person name="Zoryan M."/>
            <person name="Reisinger V."/>
            <person name="Eichacker L.A."/>
        </authorList>
    </citation>
    <scope>IDENTIFICATION BY MASS SPECTROMETRY</scope>
    <scope>SUBUNIT</scope>
    <scope>SUBCELLULAR LOCATION</scope>
    <source>
        <strain>cv. Steffi</strain>
    </source>
</reference>
<organism>
    <name type="scientific">Hordeum vulgare</name>
    <name type="common">Barley</name>
    <dbReference type="NCBI Taxonomy" id="4513"/>
    <lineage>
        <taxon>Eukaryota</taxon>
        <taxon>Viridiplantae</taxon>
        <taxon>Streptophyta</taxon>
        <taxon>Embryophyta</taxon>
        <taxon>Tracheophyta</taxon>
        <taxon>Spermatophyta</taxon>
        <taxon>Magnoliopsida</taxon>
        <taxon>Liliopsida</taxon>
        <taxon>Poales</taxon>
        <taxon>Poaceae</taxon>
        <taxon>BOP clade</taxon>
        <taxon>Pooideae</taxon>
        <taxon>Triticodae</taxon>
        <taxon>Triticeae</taxon>
        <taxon>Hordeinae</taxon>
        <taxon>Hordeum</taxon>
    </lineage>
</organism>